<evidence type="ECO:0000255" key="1">
    <source>
        <dbReference type="HAMAP-Rule" id="MF_01200"/>
    </source>
</evidence>
<sequence>MQLCVALDLPSIEENLSLAKSLKNYDIWLKVGLRSYIRDGKEFLKQIKQINPNFHIFLDLKLYDIPNTMADAAEEIAKLGVEMFNIHASAGKEAMQSVMQRVQKFQNPPLVLAVTVLTSFNEEQFRSIYNDSIENKAKQFAKEAYEAGLDGVVCSVYESDLIKNITSDTFITLTPGIRPFGESAGDQKRVADINLAKEKKVDFIVVGRPIYQANNPAEVVEKILTNL</sequence>
<comment type="function">
    <text evidence="1">Catalyzes the decarboxylation of orotidine 5'-monophosphate (OMP) to uridine 5'-monophosphate (UMP).</text>
</comment>
<comment type="catalytic activity">
    <reaction evidence="1">
        <text>orotidine 5'-phosphate + H(+) = UMP + CO2</text>
        <dbReference type="Rhea" id="RHEA:11596"/>
        <dbReference type="ChEBI" id="CHEBI:15378"/>
        <dbReference type="ChEBI" id="CHEBI:16526"/>
        <dbReference type="ChEBI" id="CHEBI:57538"/>
        <dbReference type="ChEBI" id="CHEBI:57865"/>
        <dbReference type="EC" id="4.1.1.23"/>
    </reaction>
</comment>
<comment type="pathway">
    <text evidence="1">Pyrimidine metabolism; UMP biosynthesis via de novo pathway; UMP from orotate: step 2/2.</text>
</comment>
<comment type="subunit">
    <text evidence="1">Homodimer.</text>
</comment>
<comment type="similarity">
    <text evidence="1">Belongs to the OMP decarboxylase family. Type 1 subfamily.</text>
</comment>
<feature type="chain" id="PRO_1000065923" description="Orotidine 5'-phosphate decarboxylase">
    <location>
        <begin position="1"/>
        <end position="227"/>
    </location>
</feature>
<feature type="active site" description="Proton donor" evidence="1">
    <location>
        <position position="61"/>
    </location>
</feature>
<feature type="binding site" evidence="1">
    <location>
        <position position="8"/>
    </location>
    <ligand>
        <name>substrate</name>
    </ligand>
</feature>
<feature type="binding site" evidence="1">
    <location>
        <position position="30"/>
    </location>
    <ligand>
        <name>substrate</name>
    </ligand>
</feature>
<feature type="binding site" evidence="1">
    <location>
        <begin position="59"/>
        <end position="68"/>
    </location>
    <ligand>
        <name>substrate</name>
    </ligand>
</feature>
<feature type="binding site" evidence="1">
    <location>
        <position position="118"/>
    </location>
    <ligand>
        <name>substrate</name>
    </ligand>
</feature>
<feature type="binding site" evidence="1">
    <location>
        <position position="178"/>
    </location>
    <ligand>
        <name>substrate</name>
    </ligand>
</feature>
<feature type="binding site" evidence="1">
    <location>
        <position position="187"/>
    </location>
    <ligand>
        <name>substrate</name>
    </ligand>
</feature>
<feature type="binding site" evidence="1">
    <location>
        <position position="207"/>
    </location>
    <ligand>
        <name>substrate</name>
    </ligand>
</feature>
<feature type="binding site" evidence="1">
    <location>
        <position position="208"/>
    </location>
    <ligand>
        <name>substrate</name>
    </ligand>
</feature>
<keyword id="KW-0210">Decarboxylase</keyword>
<keyword id="KW-0456">Lyase</keyword>
<keyword id="KW-0665">Pyrimidine biosynthesis</keyword>
<keyword id="KW-1185">Reference proteome</keyword>
<accession>A6Q2C1</accession>
<organism>
    <name type="scientific">Nitratiruptor sp. (strain SB155-2)</name>
    <dbReference type="NCBI Taxonomy" id="387092"/>
    <lineage>
        <taxon>Bacteria</taxon>
        <taxon>Pseudomonadati</taxon>
        <taxon>Campylobacterota</taxon>
        <taxon>Epsilonproteobacteria</taxon>
        <taxon>Nautiliales</taxon>
        <taxon>Nitratiruptoraceae</taxon>
        <taxon>Nitratiruptor</taxon>
    </lineage>
</organism>
<proteinExistence type="inferred from homology"/>
<protein>
    <recommendedName>
        <fullName evidence="1">Orotidine 5'-phosphate decarboxylase</fullName>
        <ecNumber evidence="1">4.1.1.23</ecNumber>
    </recommendedName>
    <alternativeName>
        <fullName evidence="1">OMP decarboxylase</fullName>
        <shortName evidence="1">OMPDCase</shortName>
        <shortName evidence="1">OMPdecase</shortName>
    </alternativeName>
</protein>
<name>PYRF_NITSB</name>
<reference key="1">
    <citation type="journal article" date="2007" name="Proc. Natl. Acad. Sci. U.S.A.">
        <title>Deep-sea vent epsilon-proteobacterial genomes provide insights into emergence of pathogens.</title>
        <authorList>
            <person name="Nakagawa S."/>
            <person name="Takaki Y."/>
            <person name="Shimamura S."/>
            <person name="Reysenbach A.-L."/>
            <person name="Takai K."/>
            <person name="Horikoshi K."/>
        </authorList>
    </citation>
    <scope>NUCLEOTIDE SEQUENCE [LARGE SCALE GENOMIC DNA]</scope>
    <source>
        <strain>SB155-2</strain>
    </source>
</reference>
<gene>
    <name evidence="1" type="primary">pyrF</name>
    <name type="ordered locus">NIS_0516</name>
</gene>
<dbReference type="EC" id="4.1.1.23" evidence="1"/>
<dbReference type="EMBL" id="AP009178">
    <property type="protein sequence ID" value="BAF69630.1"/>
    <property type="molecule type" value="Genomic_DNA"/>
</dbReference>
<dbReference type="RefSeq" id="WP_012081893.1">
    <property type="nucleotide sequence ID" value="NC_009662.1"/>
</dbReference>
<dbReference type="SMR" id="A6Q2C1"/>
<dbReference type="FunCoup" id="A6Q2C1">
    <property type="interactions" value="321"/>
</dbReference>
<dbReference type="STRING" id="387092.NIS_0516"/>
<dbReference type="KEGG" id="nis:NIS_0516"/>
<dbReference type="eggNOG" id="COG0284">
    <property type="taxonomic scope" value="Bacteria"/>
</dbReference>
<dbReference type="HOGENOM" id="CLU_067069_1_1_7"/>
<dbReference type="InParanoid" id="A6Q2C1"/>
<dbReference type="OrthoDB" id="9806203at2"/>
<dbReference type="UniPathway" id="UPA00070">
    <property type="reaction ID" value="UER00120"/>
</dbReference>
<dbReference type="Proteomes" id="UP000001118">
    <property type="component" value="Chromosome"/>
</dbReference>
<dbReference type="GO" id="GO:0005829">
    <property type="term" value="C:cytosol"/>
    <property type="evidence" value="ECO:0007669"/>
    <property type="project" value="TreeGrafter"/>
</dbReference>
<dbReference type="GO" id="GO:0004590">
    <property type="term" value="F:orotidine-5'-phosphate decarboxylase activity"/>
    <property type="evidence" value="ECO:0007669"/>
    <property type="project" value="UniProtKB-UniRule"/>
</dbReference>
<dbReference type="GO" id="GO:0006207">
    <property type="term" value="P:'de novo' pyrimidine nucleobase biosynthetic process"/>
    <property type="evidence" value="ECO:0007669"/>
    <property type="project" value="InterPro"/>
</dbReference>
<dbReference type="GO" id="GO:0044205">
    <property type="term" value="P:'de novo' UMP biosynthetic process"/>
    <property type="evidence" value="ECO:0007669"/>
    <property type="project" value="UniProtKB-UniRule"/>
</dbReference>
<dbReference type="CDD" id="cd04725">
    <property type="entry name" value="OMP_decarboxylase_like"/>
    <property type="match status" value="1"/>
</dbReference>
<dbReference type="Gene3D" id="3.20.20.70">
    <property type="entry name" value="Aldolase class I"/>
    <property type="match status" value="1"/>
</dbReference>
<dbReference type="HAMAP" id="MF_01200_B">
    <property type="entry name" value="OMPdecase_type1_B"/>
    <property type="match status" value="1"/>
</dbReference>
<dbReference type="InterPro" id="IPR013785">
    <property type="entry name" value="Aldolase_TIM"/>
</dbReference>
<dbReference type="InterPro" id="IPR014732">
    <property type="entry name" value="OMPdecase"/>
</dbReference>
<dbReference type="InterPro" id="IPR018089">
    <property type="entry name" value="OMPdecase_AS"/>
</dbReference>
<dbReference type="InterPro" id="IPR047596">
    <property type="entry name" value="OMPdecase_bac"/>
</dbReference>
<dbReference type="InterPro" id="IPR001754">
    <property type="entry name" value="OMPdeCOase_dom"/>
</dbReference>
<dbReference type="InterPro" id="IPR011060">
    <property type="entry name" value="RibuloseP-bd_barrel"/>
</dbReference>
<dbReference type="NCBIfam" id="NF001273">
    <property type="entry name" value="PRK00230.1"/>
    <property type="match status" value="1"/>
</dbReference>
<dbReference type="NCBIfam" id="TIGR01740">
    <property type="entry name" value="pyrF"/>
    <property type="match status" value="1"/>
</dbReference>
<dbReference type="PANTHER" id="PTHR32119">
    <property type="entry name" value="OROTIDINE 5'-PHOSPHATE DECARBOXYLASE"/>
    <property type="match status" value="1"/>
</dbReference>
<dbReference type="PANTHER" id="PTHR32119:SF2">
    <property type="entry name" value="OROTIDINE 5'-PHOSPHATE DECARBOXYLASE"/>
    <property type="match status" value="1"/>
</dbReference>
<dbReference type="Pfam" id="PF00215">
    <property type="entry name" value="OMPdecase"/>
    <property type="match status" value="1"/>
</dbReference>
<dbReference type="SMART" id="SM00934">
    <property type="entry name" value="OMPdecase"/>
    <property type="match status" value="1"/>
</dbReference>
<dbReference type="SUPFAM" id="SSF51366">
    <property type="entry name" value="Ribulose-phoshate binding barrel"/>
    <property type="match status" value="1"/>
</dbReference>
<dbReference type="PROSITE" id="PS00156">
    <property type="entry name" value="OMPDECASE"/>
    <property type="match status" value="1"/>
</dbReference>